<sequence>MSRSVWKGPFVDAYVLKKAAAVRESGRNEVIKIWSRRSTILPQFVGLTFGVYNGQKHIPVNVTEDMIGQKFGEYSPTRTYYGHAADKKAKRK</sequence>
<dbReference type="EMBL" id="CP000031">
    <property type="protein sequence ID" value="AAV93802.1"/>
    <property type="molecule type" value="Genomic_DNA"/>
</dbReference>
<dbReference type="RefSeq" id="WP_011046245.1">
    <property type="nucleotide sequence ID" value="NC_003911.12"/>
</dbReference>
<dbReference type="SMR" id="Q5LW58"/>
<dbReference type="STRING" id="246200.SPO0485"/>
<dbReference type="PaxDb" id="246200-SPO0485"/>
<dbReference type="KEGG" id="sil:SPO0485"/>
<dbReference type="eggNOG" id="COG0185">
    <property type="taxonomic scope" value="Bacteria"/>
</dbReference>
<dbReference type="HOGENOM" id="CLU_144911_0_1_5"/>
<dbReference type="OrthoDB" id="9797833at2"/>
<dbReference type="Proteomes" id="UP000001023">
    <property type="component" value="Chromosome"/>
</dbReference>
<dbReference type="GO" id="GO:0005737">
    <property type="term" value="C:cytoplasm"/>
    <property type="evidence" value="ECO:0007669"/>
    <property type="project" value="UniProtKB-ARBA"/>
</dbReference>
<dbReference type="GO" id="GO:0015935">
    <property type="term" value="C:small ribosomal subunit"/>
    <property type="evidence" value="ECO:0007669"/>
    <property type="project" value="InterPro"/>
</dbReference>
<dbReference type="GO" id="GO:0019843">
    <property type="term" value="F:rRNA binding"/>
    <property type="evidence" value="ECO:0007669"/>
    <property type="project" value="UniProtKB-UniRule"/>
</dbReference>
<dbReference type="GO" id="GO:0003735">
    <property type="term" value="F:structural constituent of ribosome"/>
    <property type="evidence" value="ECO:0007669"/>
    <property type="project" value="InterPro"/>
</dbReference>
<dbReference type="GO" id="GO:0000028">
    <property type="term" value="P:ribosomal small subunit assembly"/>
    <property type="evidence" value="ECO:0007669"/>
    <property type="project" value="TreeGrafter"/>
</dbReference>
<dbReference type="GO" id="GO:0006412">
    <property type="term" value="P:translation"/>
    <property type="evidence" value="ECO:0007669"/>
    <property type="project" value="UniProtKB-UniRule"/>
</dbReference>
<dbReference type="FunFam" id="3.30.860.10:FF:000001">
    <property type="entry name" value="30S ribosomal protein S19"/>
    <property type="match status" value="1"/>
</dbReference>
<dbReference type="Gene3D" id="3.30.860.10">
    <property type="entry name" value="30s Ribosomal Protein S19, Chain A"/>
    <property type="match status" value="1"/>
</dbReference>
<dbReference type="HAMAP" id="MF_00531">
    <property type="entry name" value="Ribosomal_uS19"/>
    <property type="match status" value="1"/>
</dbReference>
<dbReference type="InterPro" id="IPR002222">
    <property type="entry name" value="Ribosomal_uS19"/>
</dbReference>
<dbReference type="InterPro" id="IPR005732">
    <property type="entry name" value="Ribosomal_uS19_bac-type"/>
</dbReference>
<dbReference type="InterPro" id="IPR020934">
    <property type="entry name" value="Ribosomal_uS19_CS"/>
</dbReference>
<dbReference type="InterPro" id="IPR023575">
    <property type="entry name" value="Ribosomal_uS19_SF"/>
</dbReference>
<dbReference type="NCBIfam" id="TIGR01050">
    <property type="entry name" value="rpsS_bact"/>
    <property type="match status" value="1"/>
</dbReference>
<dbReference type="PANTHER" id="PTHR11880">
    <property type="entry name" value="RIBOSOMAL PROTEIN S19P FAMILY MEMBER"/>
    <property type="match status" value="1"/>
</dbReference>
<dbReference type="PANTHER" id="PTHR11880:SF8">
    <property type="entry name" value="SMALL RIBOSOMAL SUBUNIT PROTEIN US19M"/>
    <property type="match status" value="1"/>
</dbReference>
<dbReference type="Pfam" id="PF00203">
    <property type="entry name" value="Ribosomal_S19"/>
    <property type="match status" value="1"/>
</dbReference>
<dbReference type="PIRSF" id="PIRSF002144">
    <property type="entry name" value="Ribosomal_S19"/>
    <property type="match status" value="1"/>
</dbReference>
<dbReference type="PRINTS" id="PR00975">
    <property type="entry name" value="RIBOSOMALS19"/>
</dbReference>
<dbReference type="SUPFAM" id="SSF54570">
    <property type="entry name" value="Ribosomal protein S19"/>
    <property type="match status" value="1"/>
</dbReference>
<dbReference type="PROSITE" id="PS00323">
    <property type="entry name" value="RIBOSOMAL_S19"/>
    <property type="match status" value="1"/>
</dbReference>
<comment type="function">
    <text evidence="1">Protein S19 forms a complex with S13 that binds strongly to the 16S ribosomal RNA.</text>
</comment>
<comment type="similarity">
    <text evidence="1">Belongs to the universal ribosomal protein uS19 family.</text>
</comment>
<protein>
    <recommendedName>
        <fullName evidence="1">Small ribosomal subunit protein uS19</fullName>
    </recommendedName>
    <alternativeName>
        <fullName evidence="2">30S ribosomal protein S19</fullName>
    </alternativeName>
</protein>
<evidence type="ECO:0000255" key="1">
    <source>
        <dbReference type="HAMAP-Rule" id="MF_00531"/>
    </source>
</evidence>
<evidence type="ECO:0000305" key="2"/>
<name>RS19_RUEPO</name>
<accession>Q5LW58</accession>
<reference key="1">
    <citation type="journal article" date="2004" name="Nature">
        <title>Genome sequence of Silicibacter pomeroyi reveals adaptations to the marine environment.</title>
        <authorList>
            <person name="Moran M.A."/>
            <person name="Buchan A."/>
            <person name="Gonzalez J.M."/>
            <person name="Heidelberg J.F."/>
            <person name="Whitman W.B."/>
            <person name="Kiene R.P."/>
            <person name="Henriksen J.R."/>
            <person name="King G.M."/>
            <person name="Belas R."/>
            <person name="Fuqua C."/>
            <person name="Brinkac L.M."/>
            <person name="Lewis M."/>
            <person name="Johri S."/>
            <person name="Weaver B."/>
            <person name="Pai G."/>
            <person name="Eisen J.A."/>
            <person name="Rahe E."/>
            <person name="Sheldon W.M."/>
            <person name="Ye W."/>
            <person name="Miller T.R."/>
            <person name="Carlton J."/>
            <person name="Rasko D.A."/>
            <person name="Paulsen I.T."/>
            <person name="Ren Q."/>
            <person name="Daugherty S.C."/>
            <person name="DeBoy R.T."/>
            <person name="Dodson R.J."/>
            <person name="Durkin A.S."/>
            <person name="Madupu R."/>
            <person name="Nelson W.C."/>
            <person name="Sullivan S.A."/>
            <person name="Rosovitz M.J."/>
            <person name="Haft D.H."/>
            <person name="Selengut J."/>
            <person name="Ward N."/>
        </authorList>
    </citation>
    <scope>NUCLEOTIDE SEQUENCE [LARGE SCALE GENOMIC DNA]</scope>
    <source>
        <strain>ATCC 700808 / DSM 15171 / DSS-3</strain>
    </source>
</reference>
<reference key="2">
    <citation type="journal article" date="2014" name="Stand. Genomic Sci.">
        <title>An updated genome annotation for the model marine bacterium Ruegeria pomeroyi DSS-3.</title>
        <authorList>
            <person name="Rivers A.R."/>
            <person name="Smith C.B."/>
            <person name="Moran M.A."/>
        </authorList>
    </citation>
    <scope>GENOME REANNOTATION</scope>
    <source>
        <strain>ATCC 700808 / DSM 15171 / DSS-3</strain>
    </source>
</reference>
<keyword id="KW-1185">Reference proteome</keyword>
<keyword id="KW-0687">Ribonucleoprotein</keyword>
<keyword id="KW-0689">Ribosomal protein</keyword>
<keyword id="KW-0694">RNA-binding</keyword>
<keyword id="KW-0699">rRNA-binding</keyword>
<proteinExistence type="inferred from homology"/>
<gene>
    <name evidence="1" type="primary">rpsS</name>
    <name type="ordered locus">SPO0485</name>
</gene>
<organism>
    <name type="scientific">Ruegeria pomeroyi (strain ATCC 700808 / DSM 15171 / DSS-3)</name>
    <name type="common">Silicibacter pomeroyi</name>
    <dbReference type="NCBI Taxonomy" id="246200"/>
    <lineage>
        <taxon>Bacteria</taxon>
        <taxon>Pseudomonadati</taxon>
        <taxon>Pseudomonadota</taxon>
        <taxon>Alphaproteobacteria</taxon>
        <taxon>Rhodobacterales</taxon>
        <taxon>Roseobacteraceae</taxon>
        <taxon>Ruegeria</taxon>
    </lineage>
</organism>
<feature type="chain" id="PRO_0000265434" description="Small ribosomal subunit protein uS19">
    <location>
        <begin position="1"/>
        <end position="92"/>
    </location>
</feature>